<proteinExistence type="inferred from homology"/>
<feature type="chain" id="PRO_0000184636" description="Galactokinase">
    <location>
        <begin position="1"/>
        <end position="384"/>
    </location>
</feature>
<feature type="active site" description="Proton acceptor" evidence="1">
    <location>
        <position position="175"/>
    </location>
</feature>
<feature type="binding site" evidence="1">
    <location>
        <begin position="35"/>
        <end position="38"/>
    </location>
    <ligand>
        <name>substrate</name>
    </ligand>
</feature>
<feature type="binding site" evidence="1">
    <location>
        <position position="69"/>
    </location>
    <ligand>
        <name>ATP</name>
        <dbReference type="ChEBI" id="CHEBI:30616"/>
    </ligand>
</feature>
<feature type="binding site" evidence="1">
    <location>
        <begin position="125"/>
        <end position="131"/>
    </location>
    <ligand>
        <name>ATP</name>
        <dbReference type="ChEBI" id="CHEBI:30616"/>
    </ligand>
</feature>
<feature type="binding site" evidence="1">
    <location>
        <position position="131"/>
    </location>
    <ligand>
        <name>Mg(2+)</name>
        <dbReference type="ChEBI" id="CHEBI:18420"/>
    </ligand>
</feature>
<feature type="binding site" evidence="1">
    <location>
        <position position="163"/>
    </location>
    <ligand>
        <name>Mg(2+)</name>
        <dbReference type="ChEBI" id="CHEBI:18420"/>
    </ligand>
</feature>
<feature type="binding site" evidence="1">
    <location>
        <position position="224"/>
    </location>
    <ligand>
        <name>substrate</name>
    </ligand>
</feature>
<feature type="site" description="Transition state stabilizer" evidence="1">
    <location>
        <position position="29"/>
    </location>
</feature>
<reference key="1">
    <citation type="journal article" date="2005" name="Proc. Natl. Acad. Sci. U.S.A.">
        <title>Complete genome sequence of Vibrio fischeri: a symbiotic bacterium with pathogenic congeners.</title>
        <authorList>
            <person name="Ruby E.G."/>
            <person name="Urbanowski M."/>
            <person name="Campbell J."/>
            <person name="Dunn A."/>
            <person name="Faini M."/>
            <person name="Gunsalus R."/>
            <person name="Lostroh P."/>
            <person name="Lupp C."/>
            <person name="McCann J."/>
            <person name="Millikan D."/>
            <person name="Schaefer A."/>
            <person name="Stabb E."/>
            <person name="Stevens A."/>
            <person name="Visick K."/>
            <person name="Whistler C."/>
            <person name="Greenberg E.P."/>
        </authorList>
    </citation>
    <scope>NUCLEOTIDE SEQUENCE [LARGE SCALE GENOMIC DNA]</scope>
    <source>
        <strain>ATCC 700601 / ES114</strain>
    </source>
</reference>
<keyword id="KW-0067">ATP-binding</keyword>
<keyword id="KW-0119">Carbohydrate metabolism</keyword>
<keyword id="KW-0963">Cytoplasm</keyword>
<keyword id="KW-0299">Galactose metabolism</keyword>
<keyword id="KW-0418">Kinase</keyword>
<keyword id="KW-0460">Magnesium</keyword>
<keyword id="KW-0479">Metal-binding</keyword>
<keyword id="KW-0547">Nucleotide-binding</keyword>
<keyword id="KW-1185">Reference proteome</keyword>
<keyword id="KW-0808">Transferase</keyword>
<accession>Q5E0M1</accession>
<dbReference type="EC" id="2.7.1.6" evidence="1"/>
<dbReference type="EMBL" id="CP000021">
    <property type="protein sequence ID" value="AAW87425.1"/>
    <property type="molecule type" value="Genomic_DNA"/>
</dbReference>
<dbReference type="RefSeq" id="WP_011263235.1">
    <property type="nucleotide sequence ID" value="NC_006841.2"/>
</dbReference>
<dbReference type="RefSeq" id="YP_206313.1">
    <property type="nucleotide sequence ID" value="NC_006841.2"/>
</dbReference>
<dbReference type="SMR" id="Q5E0M1"/>
<dbReference type="STRING" id="312309.VF_A0355"/>
<dbReference type="EnsemblBacteria" id="AAW87425">
    <property type="protein sequence ID" value="AAW87425"/>
    <property type="gene ID" value="VF_A0355"/>
</dbReference>
<dbReference type="GeneID" id="54165672"/>
<dbReference type="KEGG" id="vfi:VF_A0355"/>
<dbReference type="PATRIC" id="fig|312309.11.peg.2958"/>
<dbReference type="eggNOG" id="COG0153">
    <property type="taxonomic scope" value="Bacteria"/>
</dbReference>
<dbReference type="HOGENOM" id="CLU_017814_2_1_6"/>
<dbReference type="OrthoDB" id="250531at2"/>
<dbReference type="UniPathway" id="UPA00214"/>
<dbReference type="Proteomes" id="UP000000537">
    <property type="component" value="Chromosome II"/>
</dbReference>
<dbReference type="GO" id="GO:0005829">
    <property type="term" value="C:cytosol"/>
    <property type="evidence" value="ECO:0007669"/>
    <property type="project" value="TreeGrafter"/>
</dbReference>
<dbReference type="GO" id="GO:0005524">
    <property type="term" value="F:ATP binding"/>
    <property type="evidence" value="ECO:0007669"/>
    <property type="project" value="UniProtKB-UniRule"/>
</dbReference>
<dbReference type="GO" id="GO:0004335">
    <property type="term" value="F:galactokinase activity"/>
    <property type="evidence" value="ECO:0007669"/>
    <property type="project" value="UniProtKB-UniRule"/>
</dbReference>
<dbReference type="GO" id="GO:0000287">
    <property type="term" value="F:magnesium ion binding"/>
    <property type="evidence" value="ECO:0007669"/>
    <property type="project" value="UniProtKB-UniRule"/>
</dbReference>
<dbReference type="GO" id="GO:0006012">
    <property type="term" value="P:galactose metabolic process"/>
    <property type="evidence" value="ECO:0007669"/>
    <property type="project" value="UniProtKB-UniRule"/>
</dbReference>
<dbReference type="FunFam" id="3.30.230.10:FF:000017">
    <property type="entry name" value="Galactokinase"/>
    <property type="match status" value="1"/>
</dbReference>
<dbReference type="FunFam" id="3.30.70.890:FF:000001">
    <property type="entry name" value="Galactokinase"/>
    <property type="match status" value="1"/>
</dbReference>
<dbReference type="Gene3D" id="3.30.230.10">
    <property type="match status" value="1"/>
</dbReference>
<dbReference type="Gene3D" id="3.30.70.890">
    <property type="entry name" value="GHMP kinase, C-terminal domain"/>
    <property type="match status" value="1"/>
</dbReference>
<dbReference type="HAMAP" id="MF_00246">
    <property type="entry name" value="Galactokinase"/>
    <property type="match status" value="1"/>
</dbReference>
<dbReference type="InterPro" id="IPR000705">
    <property type="entry name" value="Galactokinase"/>
</dbReference>
<dbReference type="InterPro" id="IPR022963">
    <property type="entry name" value="Galactokinase_bac"/>
</dbReference>
<dbReference type="InterPro" id="IPR019741">
    <property type="entry name" value="Galactokinase_CS"/>
</dbReference>
<dbReference type="InterPro" id="IPR019539">
    <property type="entry name" value="GalKase_N"/>
</dbReference>
<dbReference type="InterPro" id="IPR013750">
    <property type="entry name" value="GHMP_kinase_C_dom"/>
</dbReference>
<dbReference type="InterPro" id="IPR036554">
    <property type="entry name" value="GHMP_kinase_C_sf"/>
</dbReference>
<dbReference type="InterPro" id="IPR006204">
    <property type="entry name" value="GHMP_kinase_N_dom"/>
</dbReference>
<dbReference type="InterPro" id="IPR006203">
    <property type="entry name" value="GHMP_knse_ATP-bd_CS"/>
</dbReference>
<dbReference type="InterPro" id="IPR006206">
    <property type="entry name" value="Mevalonate/galactokinase"/>
</dbReference>
<dbReference type="InterPro" id="IPR020568">
    <property type="entry name" value="Ribosomal_Su5_D2-typ_SF"/>
</dbReference>
<dbReference type="InterPro" id="IPR014721">
    <property type="entry name" value="Ribsml_uS5_D2-typ_fold_subgr"/>
</dbReference>
<dbReference type="NCBIfam" id="TIGR00131">
    <property type="entry name" value="gal_kin"/>
    <property type="match status" value="1"/>
</dbReference>
<dbReference type="NCBIfam" id="NF003472">
    <property type="entry name" value="PRK05101.1"/>
    <property type="match status" value="1"/>
</dbReference>
<dbReference type="NCBIfam" id="NF003705">
    <property type="entry name" value="PRK05322.1"/>
    <property type="match status" value="1"/>
</dbReference>
<dbReference type="PANTHER" id="PTHR10457:SF7">
    <property type="entry name" value="GALACTOKINASE-RELATED"/>
    <property type="match status" value="1"/>
</dbReference>
<dbReference type="PANTHER" id="PTHR10457">
    <property type="entry name" value="MEVALONATE KINASE/GALACTOKINASE"/>
    <property type="match status" value="1"/>
</dbReference>
<dbReference type="Pfam" id="PF10509">
    <property type="entry name" value="GalKase_gal_bdg"/>
    <property type="match status" value="1"/>
</dbReference>
<dbReference type="Pfam" id="PF08544">
    <property type="entry name" value="GHMP_kinases_C"/>
    <property type="match status" value="1"/>
</dbReference>
<dbReference type="Pfam" id="PF00288">
    <property type="entry name" value="GHMP_kinases_N"/>
    <property type="match status" value="1"/>
</dbReference>
<dbReference type="PIRSF" id="PIRSF000530">
    <property type="entry name" value="Galactokinase"/>
    <property type="match status" value="1"/>
</dbReference>
<dbReference type="PRINTS" id="PR00473">
    <property type="entry name" value="GALCTOKINASE"/>
</dbReference>
<dbReference type="PRINTS" id="PR00959">
    <property type="entry name" value="MEVGALKINASE"/>
</dbReference>
<dbReference type="SUPFAM" id="SSF55060">
    <property type="entry name" value="GHMP Kinase, C-terminal domain"/>
    <property type="match status" value="1"/>
</dbReference>
<dbReference type="SUPFAM" id="SSF54211">
    <property type="entry name" value="Ribosomal protein S5 domain 2-like"/>
    <property type="match status" value="1"/>
</dbReference>
<dbReference type="PROSITE" id="PS00106">
    <property type="entry name" value="GALACTOKINASE"/>
    <property type="match status" value="1"/>
</dbReference>
<dbReference type="PROSITE" id="PS00627">
    <property type="entry name" value="GHMP_KINASES_ATP"/>
    <property type="match status" value="1"/>
</dbReference>
<protein>
    <recommendedName>
        <fullName evidence="1">Galactokinase</fullName>
        <ecNumber evidence="1">2.7.1.6</ecNumber>
    </recommendedName>
    <alternativeName>
        <fullName evidence="1">Galactose kinase</fullName>
    </alternativeName>
</protein>
<sequence>MTNLIKNVKDAFNSVLSYAPTHIVQAPGRVNLIGEHTDYNDGFVLPCAINYQTVVAAAKRDDNIVRVVSVDYGNETDEFDITQEITFQENKMWSNYIRGVVKCLIDRGYEFKGADISVSGNVPQGAGLSSSAALEVVIGQTFKELYNLNISQAEIALNGQQAENEFVGCNCGIMDQMISAEGNENHAMLLDCRSLETTAVSMPEDMSVVIINSNKKRGLVDSEYNTRREQCEEAARIFGVKALRDVTIEEFNAKAHELDEMVAKRARHVITENDRTEEAAKVLASGDMKRMAVLMAESHASMRDDFEITVSEVDTLVDIVKNVIGAEGGVRMTGGGFGGCIVALVPPMLVDEVKAAVEELYEAKTGLKESIYVCQATNGAGLVL</sequence>
<gene>
    <name evidence="1" type="primary">galK</name>
    <name type="ordered locus">VF_A0355</name>
</gene>
<organism>
    <name type="scientific">Aliivibrio fischeri (strain ATCC 700601 / ES114)</name>
    <name type="common">Vibrio fischeri</name>
    <dbReference type="NCBI Taxonomy" id="312309"/>
    <lineage>
        <taxon>Bacteria</taxon>
        <taxon>Pseudomonadati</taxon>
        <taxon>Pseudomonadota</taxon>
        <taxon>Gammaproteobacteria</taxon>
        <taxon>Vibrionales</taxon>
        <taxon>Vibrionaceae</taxon>
        <taxon>Aliivibrio</taxon>
    </lineage>
</organism>
<comment type="function">
    <text evidence="1">Catalyzes the transfer of the gamma-phosphate of ATP to D-galactose to form alpha-D-galactose-1-phosphate (Gal-1-P).</text>
</comment>
<comment type="catalytic activity">
    <reaction evidence="1">
        <text>alpha-D-galactose + ATP = alpha-D-galactose 1-phosphate + ADP + H(+)</text>
        <dbReference type="Rhea" id="RHEA:13553"/>
        <dbReference type="ChEBI" id="CHEBI:15378"/>
        <dbReference type="ChEBI" id="CHEBI:28061"/>
        <dbReference type="ChEBI" id="CHEBI:30616"/>
        <dbReference type="ChEBI" id="CHEBI:58336"/>
        <dbReference type="ChEBI" id="CHEBI:456216"/>
        <dbReference type="EC" id="2.7.1.6"/>
    </reaction>
</comment>
<comment type="pathway">
    <text evidence="1">Carbohydrate metabolism; galactose metabolism.</text>
</comment>
<comment type="subcellular location">
    <subcellularLocation>
        <location evidence="1">Cytoplasm</location>
    </subcellularLocation>
</comment>
<comment type="similarity">
    <text evidence="1">Belongs to the GHMP kinase family. GalK subfamily.</text>
</comment>
<name>GAL1_ALIF1</name>
<evidence type="ECO:0000255" key="1">
    <source>
        <dbReference type="HAMAP-Rule" id="MF_00246"/>
    </source>
</evidence>